<comment type="function">
    <text evidence="1">Specifically methylates the cytosine at position 967 (m5C967) of 16S rRNA.</text>
</comment>
<comment type="catalytic activity">
    <reaction evidence="1">
        <text>cytidine(967) in 16S rRNA + S-adenosyl-L-methionine = 5-methylcytidine(967) in 16S rRNA + S-adenosyl-L-homocysteine + H(+)</text>
        <dbReference type="Rhea" id="RHEA:42748"/>
        <dbReference type="Rhea" id="RHEA-COMP:10219"/>
        <dbReference type="Rhea" id="RHEA-COMP:10220"/>
        <dbReference type="ChEBI" id="CHEBI:15378"/>
        <dbReference type="ChEBI" id="CHEBI:57856"/>
        <dbReference type="ChEBI" id="CHEBI:59789"/>
        <dbReference type="ChEBI" id="CHEBI:74483"/>
        <dbReference type="ChEBI" id="CHEBI:82748"/>
        <dbReference type="EC" id="2.1.1.176"/>
    </reaction>
</comment>
<comment type="subcellular location">
    <subcellularLocation>
        <location evidence="1">Cytoplasm</location>
    </subcellularLocation>
</comment>
<comment type="similarity">
    <text evidence="1">Belongs to the class I-like SAM-binding methyltransferase superfamily. RsmB/NOP family.</text>
</comment>
<evidence type="ECO:0000255" key="1">
    <source>
        <dbReference type="HAMAP-Rule" id="MF_01856"/>
    </source>
</evidence>
<reference key="1">
    <citation type="journal article" date="2002" name="Nucleic Acids Res.">
        <title>Genome sequence of Shigella flexneri 2a: insights into pathogenicity through comparison with genomes of Escherichia coli K12 and O157.</title>
        <authorList>
            <person name="Jin Q."/>
            <person name="Yuan Z."/>
            <person name="Xu J."/>
            <person name="Wang Y."/>
            <person name="Shen Y."/>
            <person name="Lu W."/>
            <person name="Wang J."/>
            <person name="Liu H."/>
            <person name="Yang J."/>
            <person name="Yang F."/>
            <person name="Zhang X."/>
            <person name="Zhang J."/>
            <person name="Yang G."/>
            <person name="Wu H."/>
            <person name="Qu D."/>
            <person name="Dong J."/>
            <person name="Sun L."/>
            <person name="Xue Y."/>
            <person name="Zhao A."/>
            <person name="Gao Y."/>
            <person name="Zhu J."/>
            <person name="Kan B."/>
            <person name="Ding K."/>
            <person name="Chen S."/>
            <person name="Cheng H."/>
            <person name="Yao Z."/>
            <person name="He B."/>
            <person name="Chen R."/>
            <person name="Ma D."/>
            <person name="Qiang B."/>
            <person name="Wen Y."/>
            <person name="Hou Y."/>
            <person name="Yu J."/>
        </authorList>
    </citation>
    <scope>NUCLEOTIDE SEQUENCE [LARGE SCALE GENOMIC DNA]</scope>
    <source>
        <strain>301 / Serotype 2a</strain>
    </source>
</reference>
<reference key="2">
    <citation type="journal article" date="2003" name="Infect. Immun.">
        <title>Complete genome sequence and comparative genomics of Shigella flexneri serotype 2a strain 2457T.</title>
        <authorList>
            <person name="Wei J."/>
            <person name="Goldberg M.B."/>
            <person name="Burland V."/>
            <person name="Venkatesan M.M."/>
            <person name="Deng W."/>
            <person name="Fournier G."/>
            <person name="Mayhew G.F."/>
            <person name="Plunkett G. III"/>
            <person name="Rose D.J."/>
            <person name="Darling A."/>
            <person name="Mau B."/>
            <person name="Perna N.T."/>
            <person name="Payne S.M."/>
            <person name="Runyen-Janecky L.J."/>
            <person name="Zhou S."/>
            <person name="Schwartz D.C."/>
            <person name="Blattner F.R."/>
        </authorList>
    </citation>
    <scope>NUCLEOTIDE SEQUENCE [LARGE SCALE GENOMIC DNA]</scope>
    <source>
        <strain>ATCC 700930 / 2457T / Serotype 2a</strain>
    </source>
</reference>
<protein>
    <recommendedName>
        <fullName evidence="1">Ribosomal RNA small subunit methyltransferase B</fullName>
        <ecNumber evidence="1">2.1.1.176</ecNumber>
    </recommendedName>
    <alternativeName>
        <fullName evidence="1">16S rRNA m5C967 methyltransferase</fullName>
    </alternativeName>
    <alternativeName>
        <fullName evidence="1">rRNA (cytosine-C(5)-)-methyltransferase RsmB</fullName>
    </alternativeName>
</protein>
<sequence>MKKQRNLRSMAAQAVEQVVEQGQSLSNILPPLQQKVSDKDKALLQELCFGVLRTLSQLDWLINKLMARPMTGKQRTVHYLIMVGLYQLLYTRIPPHAALAETVEGAIAIKRPQLKGLINGVLRQFQRRQEELLAEFNTRDARYLHPSWLLKRLQKAYPEQWQSIAEANNQRPPMWLRINRTHHSRDSWLALLDEAGMKGFPHADYPDAVRLETPAPVHALPGFEDGWVTVQDASAQGCMTWLAPQNGEHILDLCAAPGGKTTHILEVAPEAQVVAVDIDEQRLSRIYDNLKRLGMKATVKQGDGRYPSQWCGEQQFDRILLDAPCSATGVIRRHPDIKWLRRDRDIPELAQLQSEILDAIWPHLKSGGTLVYATCSVLPEENSLQIKAFLQRTADAELCETGTPEQPGKQNQPGAEEGDGFFYAKLIKK</sequence>
<keyword id="KW-0963">Cytoplasm</keyword>
<keyword id="KW-0489">Methyltransferase</keyword>
<keyword id="KW-1185">Reference proteome</keyword>
<keyword id="KW-0694">RNA-binding</keyword>
<keyword id="KW-0698">rRNA processing</keyword>
<keyword id="KW-0949">S-adenosyl-L-methionine</keyword>
<keyword id="KW-0808">Transferase</keyword>
<accession>Q7UBD3</accession>
<accession>Q83JC9</accession>
<dbReference type="EC" id="2.1.1.176" evidence="1"/>
<dbReference type="EMBL" id="AE005674">
    <property type="protein sequence ID" value="AAN44783.2"/>
    <property type="molecule type" value="Genomic_DNA"/>
</dbReference>
<dbReference type="EMBL" id="AE014073">
    <property type="protein sequence ID" value="AAP18592.1"/>
    <property type="molecule type" value="Genomic_DNA"/>
</dbReference>
<dbReference type="RefSeq" id="NP_709076.2">
    <property type="nucleotide sequence ID" value="NC_004337.2"/>
</dbReference>
<dbReference type="RefSeq" id="WP_005050632.1">
    <property type="nucleotide sequence ID" value="NZ_WPGW01000137.1"/>
</dbReference>
<dbReference type="SMR" id="Q7UBD3"/>
<dbReference type="STRING" id="198214.SF3320"/>
<dbReference type="PaxDb" id="198214-SF3320"/>
<dbReference type="GeneID" id="1027014"/>
<dbReference type="KEGG" id="sfl:SF3320"/>
<dbReference type="KEGG" id="sfx:S3545"/>
<dbReference type="PATRIC" id="fig|198214.7.peg.3929"/>
<dbReference type="HOGENOM" id="CLU_005316_0_4_6"/>
<dbReference type="Proteomes" id="UP000001006">
    <property type="component" value="Chromosome"/>
</dbReference>
<dbReference type="Proteomes" id="UP000002673">
    <property type="component" value="Chromosome"/>
</dbReference>
<dbReference type="GO" id="GO:0005829">
    <property type="term" value="C:cytosol"/>
    <property type="evidence" value="ECO:0007669"/>
    <property type="project" value="TreeGrafter"/>
</dbReference>
<dbReference type="GO" id="GO:0003723">
    <property type="term" value="F:RNA binding"/>
    <property type="evidence" value="ECO:0007669"/>
    <property type="project" value="UniProtKB-KW"/>
</dbReference>
<dbReference type="GO" id="GO:0009383">
    <property type="term" value="F:rRNA (cytosine-C5-)-methyltransferase activity"/>
    <property type="evidence" value="ECO:0007669"/>
    <property type="project" value="TreeGrafter"/>
</dbReference>
<dbReference type="GO" id="GO:0006355">
    <property type="term" value="P:regulation of DNA-templated transcription"/>
    <property type="evidence" value="ECO:0007669"/>
    <property type="project" value="InterPro"/>
</dbReference>
<dbReference type="GO" id="GO:0070475">
    <property type="term" value="P:rRNA base methylation"/>
    <property type="evidence" value="ECO:0007669"/>
    <property type="project" value="TreeGrafter"/>
</dbReference>
<dbReference type="CDD" id="cd02440">
    <property type="entry name" value="AdoMet_MTases"/>
    <property type="match status" value="1"/>
</dbReference>
<dbReference type="CDD" id="cd00620">
    <property type="entry name" value="Methyltransferase_Sun"/>
    <property type="match status" value="1"/>
</dbReference>
<dbReference type="FunFam" id="1.10.287.730:FF:000001">
    <property type="entry name" value="Ribosomal RNA small subunit methyltransferase B"/>
    <property type="match status" value="1"/>
</dbReference>
<dbReference type="FunFam" id="1.10.940.10:FF:000002">
    <property type="entry name" value="Ribosomal RNA small subunit methyltransferase B"/>
    <property type="match status" value="1"/>
</dbReference>
<dbReference type="FunFam" id="3.30.70.1170:FF:000002">
    <property type="entry name" value="Ribosomal RNA small subunit methyltransferase B"/>
    <property type="match status" value="1"/>
</dbReference>
<dbReference type="FunFam" id="3.40.50.150:FF:000022">
    <property type="entry name" value="Ribosomal RNA small subunit methyltransferase B"/>
    <property type="match status" value="1"/>
</dbReference>
<dbReference type="Gene3D" id="1.10.287.730">
    <property type="entry name" value="Helix hairpin bin"/>
    <property type="match status" value="1"/>
</dbReference>
<dbReference type="Gene3D" id="1.10.940.10">
    <property type="entry name" value="NusB-like"/>
    <property type="match status" value="1"/>
</dbReference>
<dbReference type="Gene3D" id="3.30.70.1170">
    <property type="entry name" value="Sun protein, domain 3"/>
    <property type="match status" value="1"/>
</dbReference>
<dbReference type="Gene3D" id="3.40.50.150">
    <property type="entry name" value="Vaccinia Virus protein VP39"/>
    <property type="match status" value="1"/>
</dbReference>
<dbReference type="HAMAP" id="MF_01856">
    <property type="entry name" value="16SrRNA_methyltr_B"/>
    <property type="match status" value="1"/>
</dbReference>
<dbReference type="InterPro" id="IPR049560">
    <property type="entry name" value="MeTrfase_RsmB-F_NOP2_cat"/>
</dbReference>
<dbReference type="InterPro" id="IPR001678">
    <property type="entry name" value="MeTrfase_RsmB-F_NOP2_dom"/>
</dbReference>
<dbReference type="InterPro" id="IPR035926">
    <property type="entry name" value="NusB-like_sf"/>
</dbReference>
<dbReference type="InterPro" id="IPR006027">
    <property type="entry name" value="NusB_RsmB_TIM44"/>
</dbReference>
<dbReference type="InterPro" id="IPR023267">
    <property type="entry name" value="RCMT"/>
</dbReference>
<dbReference type="InterPro" id="IPR004573">
    <property type="entry name" value="rRNA_ssu_MeTfrase_B"/>
</dbReference>
<dbReference type="InterPro" id="IPR023541">
    <property type="entry name" value="rRNA_ssu_MeTfrase_B_ent"/>
</dbReference>
<dbReference type="InterPro" id="IPR054728">
    <property type="entry name" value="RsmB-like_ferredoxin"/>
</dbReference>
<dbReference type="InterPro" id="IPR048019">
    <property type="entry name" value="RsmB-like_N"/>
</dbReference>
<dbReference type="InterPro" id="IPR018314">
    <property type="entry name" value="RsmB/NOL1/NOP2-like_CS"/>
</dbReference>
<dbReference type="InterPro" id="IPR029063">
    <property type="entry name" value="SAM-dependent_MTases_sf"/>
</dbReference>
<dbReference type="NCBIfam" id="NF008149">
    <property type="entry name" value="PRK10901.1"/>
    <property type="match status" value="1"/>
</dbReference>
<dbReference type="NCBIfam" id="NF011494">
    <property type="entry name" value="PRK14902.1"/>
    <property type="match status" value="1"/>
</dbReference>
<dbReference type="NCBIfam" id="TIGR00563">
    <property type="entry name" value="rsmB"/>
    <property type="match status" value="1"/>
</dbReference>
<dbReference type="PANTHER" id="PTHR22807:SF61">
    <property type="entry name" value="NOL1_NOP2_SUN FAMILY PROTEIN _ ANTITERMINATION NUSB DOMAIN-CONTAINING PROTEIN"/>
    <property type="match status" value="1"/>
</dbReference>
<dbReference type="PANTHER" id="PTHR22807">
    <property type="entry name" value="NOP2 YEAST -RELATED NOL1/NOP2/FMU SUN DOMAIN-CONTAINING"/>
    <property type="match status" value="1"/>
</dbReference>
<dbReference type="Pfam" id="PF01189">
    <property type="entry name" value="Methyltr_RsmB-F"/>
    <property type="match status" value="1"/>
</dbReference>
<dbReference type="Pfam" id="PF01029">
    <property type="entry name" value="NusB"/>
    <property type="match status" value="1"/>
</dbReference>
<dbReference type="Pfam" id="PF22458">
    <property type="entry name" value="RsmF-B_ferredox"/>
    <property type="match status" value="1"/>
</dbReference>
<dbReference type="PRINTS" id="PR02008">
    <property type="entry name" value="RCMTFAMILY"/>
</dbReference>
<dbReference type="SUPFAM" id="SSF48013">
    <property type="entry name" value="NusB-like"/>
    <property type="match status" value="1"/>
</dbReference>
<dbReference type="SUPFAM" id="SSF53335">
    <property type="entry name" value="S-adenosyl-L-methionine-dependent methyltransferases"/>
    <property type="match status" value="1"/>
</dbReference>
<dbReference type="PROSITE" id="PS01153">
    <property type="entry name" value="NOL1_NOP2_SUN"/>
    <property type="match status" value="1"/>
</dbReference>
<dbReference type="PROSITE" id="PS51686">
    <property type="entry name" value="SAM_MT_RSMB_NOP"/>
    <property type="match status" value="1"/>
</dbReference>
<feature type="chain" id="PRO_0000211805" description="Ribosomal RNA small subunit methyltransferase B">
    <location>
        <begin position="1"/>
        <end position="429"/>
    </location>
</feature>
<feature type="active site" description="Nucleophile" evidence="1">
    <location>
        <position position="375"/>
    </location>
</feature>
<feature type="binding site" evidence="1">
    <location>
        <begin position="254"/>
        <end position="260"/>
    </location>
    <ligand>
        <name>S-adenosyl-L-methionine</name>
        <dbReference type="ChEBI" id="CHEBI:59789"/>
    </ligand>
</feature>
<feature type="binding site" evidence="1">
    <location>
        <position position="277"/>
    </location>
    <ligand>
        <name>S-adenosyl-L-methionine</name>
        <dbReference type="ChEBI" id="CHEBI:59789"/>
    </ligand>
</feature>
<feature type="binding site" evidence="1">
    <location>
        <position position="303"/>
    </location>
    <ligand>
        <name>S-adenosyl-L-methionine</name>
        <dbReference type="ChEBI" id="CHEBI:59789"/>
    </ligand>
</feature>
<feature type="binding site" evidence="1">
    <location>
        <position position="322"/>
    </location>
    <ligand>
        <name>S-adenosyl-L-methionine</name>
        <dbReference type="ChEBI" id="CHEBI:59789"/>
    </ligand>
</feature>
<proteinExistence type="inferred from homology"/>
<organism>
    <name type="scientific">Shigella flexneri</name>
    <dbReference type="NCBI Taxonomy" id="623"/>
    <lineage>
        <taxon>Bacteria</taxon>
        <taxon>Pseudomonadati</taxon>
        <taxon>Pseudomonadota</taxon>
        <taxon>Gammaproteobacteria</taxon>
        <taxon>Enterobacterales</taxon>
        <taxon>Enterobacteriaceae</taxon>
        <taxon>Shigella</taxon>
    </lineage>
</organism>
<name>RSMB_SHIFL</name>
<gene>
    <name evidence="1" type="primary">rsmB</name>
    <name type="synonym">rrmB</name>
    <name evidence="1" type="synonym">sun</name>
    <name type="ordered locus">SF3320</name>
    <name type="ordered locus">S3545</name>
</gene>